<sequence length="155" mass="17516">MSRRGTTEEKTAKSDPIYRNRLVNMLVNRILKHGKKSLAYQIIYRAVKKIQQKTETNPLSVLRQAIRGVTPDIAVKARRVGGSTHQVPIEIGSTQGKALAIRWLLWASRKRPGRNMAFKLSSELLDAAKGSGDAIRKKEETHRMAEANRAFAHFR</sequence>
<keyword id="KW-0150">Chloroplast</keyword>
<keyword id="KW-0934">Plastid</keyword>
<keyword id="KW-0687">Ribonucleoprotein</keyword>
<keyword id="KW-0689">Ribosomal protein</keyword>
<keyword id="KW-0694">RNA-binding</keyword>
<keyword id="KW-0699">rRNA-binding</keyword>
<protein>
    <recommendedName>
        <fullName evidence="2">Small ribosomal subunit protein uS7c</fullName>
    </recommendedName>
    <alternativeName>
        <fullName>30S ribosomal protein S7, chloroplastic</fullName>
    </alternativeName>
</protein>
<comment type="function">
    <text evidence="1">One of the primary rRNA binding proteins, it binds directly to 16S rRNA where it nucleates assembly of the head domain of the 30S subunit.</text>
</comment>
<comment type="subunit">
    <text>Part of the 30S ribosomal subunit.</text>
</comment>
<comment type="subcellular location">
    <subcellularLocation>
        <location>Plastid</location>
        <location>Chloroplast</location>
    </subcellularLocation>
</comment>
<comment type="similarity">
    <text evidence="2">Belongs to the universal ribosomal protein uS7 family.</text>
</comment>
<feature type="chain" id="PRO_0000124460" description="Small ribosomal subunit protein uS7c">
    <location>
        <begin position="1"/>
        <end position="155"/>
    </location>
</feature>
<gene>
    <name type="primary">rps7</name>
</gene>
<geneLocation type="chloroplast"/>
<reference key="1">
    <citation type="submission" date="2003-02" db="EMBL/GenBank/DDBJ databases">
        <title>Parsing out signal and noise for seed-plant phylogenetic inference.</title>
        <authorList>
            <person name="Graham S.W."/>
            <person name="Rai H.S."/>
            <person name="Ikegami K."/>
            <person name="Reeves P.A."/>
            <person name="Olmstead R.G."/>
        </authorList>
    </citation>
    <scope>NUCLEOTIDE SEQUENCE [GENOMIC DNA]</scope>
</reference>
<accession>Q6EM90</accession>
<name>RR7_HOUCO</name>
<dbReference type="EMBL" id="AY237138">
    <property type="protein sequence ID" value="AAQ64551.1"/>
    <property type="molecule type" value="Genomic_DNA"/>
</dbReference>
<dbReference type="SMR" id="Q6EM90"/>
<dbReference type="GO" id="GO:0009507">
    <property type="term" value="C:chloroplast"/>
    <property type="evidence" value="ECO:0007669"/>
    <property type="project" value="UniProtKB-SubCell"/>
</dbReference>
<dbReference type="GO" id="GO:0015935">
    <property type="term" value="C:small ribosomal subunit"/>
    <property type="evidence" value="ECO:0007669"/>
    <property type="project" value="InterPro"/>
</dbReference>
<dbReference type="GO" id="GO:0019843">
    <property type="term" value="F:rRNA binding"/>
    <property type="evidence" value="ECO:0007669"/>
    <property type="project" value="UniProtKB-UniRule"/>
</dbReference>
<dbReference type="GO" id="GO:0003735">
    <property type="term" value="F:structural constituent of ribosome"/>
    <property type="evidence" value="ECO:0007669"/>
    <property type="project" value="InterPro"/>
</dbReference>
<dbReference type="GO" id="GO:0006412">
    <property type="term" value="P:translation"/>
    <property type="evidence" value="ECO:0007669"/>
    <property type="project" value="UniProtKB-UniRule"/>
</dbReference>
<dbReference type="CDD" id="cd14871">
    <property type="entry name" value="uS7_Chloroplast"/>
    <property type="match status" value="1"/>
</dbReference>
<dbReference type="FunFam" id="1.10.455.10:FF:000001">
    <property type="entry name" value="30S ribosomal protein S7"/>
    <property type="match status" value="1"/>
</dbReference>
<dbReference type="Gene3D" id="1.10.455.10">
    <property type="entry name" value="Ribosomal protein S7 domain"/>
    <property type="match status" value="1"/>
</dbReference>
<dbReference type="HAMAP" id="MF_00480_B">
    <property type="entry name" value="Ribosomal_uS7_B"/>
    <property type="match status" value="1"/>
</dbReference>
<dbReference type="InterPro" id="IPR000235">
    <property type="entry name" value="Ribosomal_uS7"/>
</dbReference>
<dbReference type="InterPro" id="IPR005717">
    <property type="entry name" value="Ribosomal_uS7_bac/org-type"/>
</dbReference>
<dbReference type="InterPro" id="IPR020606">
    <property type="entry name" value="Ribosomal_uS7_CS"/>
</dbReference>
<dbReference type="InterPro" id="IPR023798">
    <property type="entry name" value="Ribosomal_uS7_dom"/>
</dbReference>
<dbReference type="InterPro" id="IPR036823">
    <property type="entry name" value="Ribosomal_uS7_dom_sf"/>
</dbReference>
<dbReference type="NCBIfam" id="TIGR01029">
    <property type="entry name" value="rpsG_bact"/>
    <property type="match status" value="1"/>
</dbReference>
<dbReference type="PANTHER" id="PTHR11205">
    <property type="entry name" value="RIBOSOMAL PROTEIN S7"/>
    <property type="match status" value="1"/>
</dbReference>
<dbReference type="Pfam" id="PF00177">
    <property type="entry name" value="Ribosomal_S7"/>
    <property type="match status" value="1"/>
</dbReference>
<dbReference type="PIRSF" id="PIRSF002122">
    <property type="entry name" value="RPS7p_RPS7a_RPS5e_RPS7o"/>
    <property type="match status" value="1"/>
</dbReference>
<dbReference type="SUPFAM" id="SSF47973">
    <property type="entry name" value="Ribosomal protein S7"/>
    <property type="match status" value="1"/>
</dbReference>
<dbReference type="PROSITE" id="PS00052">
    <property type="entry name" value="RIBOSOMAL_S7"/>
    <property type="match status" value="1"/>
</dbReference>
<evidence type="ECO:0000250" key="1"/>
<evidence type="ECO:0000305" key="2"/>
<proteinExistence type="inferred from homology"/>
<organism>
    <name type="scientific">Houttuynia cordata</name>
    <name type="common">Chameleon plant</name>
    <dbReference type="NCBI Taxonomy" id="16752"/>
    <lineage>
        <taxon>Eukaryota</taxon>
        <taxon>Viridiplantae</taxon>
        <taxon>Streptophyta</taxon>
        <taxon>Embryophyta</taxon>
        <taxon>Tracheophyta</taxon>
        <taxon>Spermatophyta</taxon>
        <taxon>Magnoliopsida</taxon>
        <taxon>Magnoliidae</taxon>
        <taxon>Piperales</taxon>
        <taxon>Saururaceae</taxon>
        <taxon>Houttuynia</taxon>
    </lineage>
</organism>